<proteinExistence type="inferred from homology"/>
<organism>
    <name type="scientific">Hydrogenovibrio crunogenus (strain DSM 25203 / XCL-2)</name>
    <name type="common">Thiomicrospira crunogena</name>
    <dbReference type="NCBI Taxonomy" id="317025"/>
    <lineage>
        <taxon>Bacteria</taxon>
        <taxon>Pseudomonadati</taxon>
        <taxon>Pseudomonadota</taxon>
        <taxon>Gammaproteobacteria</taxon>
        <taxon>Thiotrichales</taxon>
        <taxon>Piscirickettsiaceae</taxon>
        <taxon>Hydrogenovibrio</taxon>
    </lineage>
</organism>
<name>LIPB_HYDCU</name>
<evidence type="ECO:0000255" key="1">
    <source>
        <dbReference type="HAMAP-Rule" id="MF_00013"/>
    </source>
</evidence>
<evidence type="ECO:0000255" key="2">
    <source>
        <dbReference type="PROSITE-ProRule" id="PRU01067"/>
    </source>
</evidence>
<feature type="chain" id="PRO_0000242779" description="Octanoyltransferase">
    <location>
        <begin position="1"/>
        <end position="209"/>
    </location>
</feature>
<feature type="domain" description="BPL/LPL catalytic" evidence="2">
    <location>
        <begin position="29"/>
        <end position="209"/>
    </location>
</feature>
<feature type="active site" description="Acyl-thioester intermediate" evidence="1">
    <location>
        <position position="169"/>
    </location>
</feature>
<feature type="binding site" evidence="1">
    <location>
        <begin position="71"/>
        <end position="78"/>
    </location>
    <ligand>
        <name>substrate</name>
    </ligand>
</feature>
<feature type="binding site" evidence="1">
    <location>
        <begin position="138"/>
        <end position="140"/>
    </location>
    <ligand>
        <name>substrate</name>
    </ligand>
</feature>
<feature type="binding site" evidence="1">
    <location>
        <begin position="151"/>
        <end position="153"/>
    </location>
    <ligand>
        <name>substrate</name>
    </ligand>
</feature>
<feature type="site" description="Lowers pKa of active site Cys" evidence="1">
    <location>
        <position position="135"/>
    </location>
</feature>
<comment type="function">
    <text evidence="1">Catalyzes the transfer of endogenously produced octanoic acid from octanoyl-acyl-carrier-protein onto the lipoyl domains of lipoate-dependent enzymes. Lipoyl-ACP can also act as a substrate although octanoyl-ACP is likely to be the physiological substrate.</text>
</comment>
<comment type="catalytic activity">
    <reaction evidence="1">
        <text>octanoyl-[ACP] + L-lysyl-[protein] = N(6)-octanoyl-L-lysyl-[protein] + holo-[ACP] + H(+)</text>
        <dbReference type="Rhea" id="RHEA:17665"/>
        <dbReference type="Rhea" id="RHEA-COMP:9636"/>
        <dbReference type="Rhea" id="RHEA-COMP:9685"/>
        <dbReference type="Rhea" id="RHEA-COMP:9752"/>
        <dbReference type="Rhea" id="RHEA-COMP:9928"/>
        <dbReference type="ChEBI" id="CHEBI:15378"/>
        <dbReference type="ChEBI" id="CHEBI:29969"/>
        <dbReference type="ChEBI" id="CHEBI:64479"/>
        <dbReference type="ChEBI" id="CHEBI:78463"/>
        <dbReference type="ChEBI" id="CHEBI:78809"/>
        <dbReference type="EC" id="2.3.1.181"/>
    </reaction>
</comment>
<comment type="pathway">
    <text evidence="1">Protein modification; protein lipoylation via endogenous pathway; protein N(6)-(lipoyl)lysine from octanoyl-[acyl-carrier-protein]: step 1/2.</text>
</comment>
<comment type="subcellular location">
    <subcellularLocation>
        <location evidence="1">Cytoplasm</location>
    </subcellularLocation>
</comment>
<comment type="miscellaneous">
    <text evidence="1">In the reaction, the free carboxyl group of octanoic acid is attached via an amide linkage to the epsilon-amino group of a specific lysine residue of lipoyl domains of lipoate-dependent enzymes.</text>
</comment>
<comment type="similarity">
    <text evidence="1">Belongs to the LipB family.</text>
</comment>
<keyword id="KW-0012">Acyltransferase</keyword>
<keyword id="KW-0963">Cytoplasm</keyword>
<keyword id="KW-0808">Transferase</keyword>
<accession>Q31F43</accession>
<protein>
    <recommendedName>
        <fullName evidence="1">Octanoyltransferase</fullName>
        <ecNumber evidence="1">2.3.1.181</ecNumber>
    </recommendedName>
    <alternativeName>
        <fullName evidence="1">Lipoate-protein ligase B</fullName>
    </alternativeName>
    <alternativeName>
        <fullName evidence="1">Lipoyl/octanoyl transferase</fullName>
    </alternativeName>
    <alternativeName>
        <fullName evidence="1">Octanoyl-[acyl-carrier-protein]-protein N-octanoyltransferase</fullName>
    </alternativeName>
</protein>
<gene>
    <name evidence="1" type="primary">lipB</name>
    <name type="ordered locus">Tcr_1638</name>
</gene>
<sequence>MPLQVKYLGLQPYESTWEAMQRFTNERTEHTPDELWVVEHPPVFTQGLNGQAKHLQAFALEQNIPIIQTDRGGQVTYHGPGQIIIYVLLDLKRAQLGVRDLVHRMEKAIIEFLCDLSISADARPDAPGVYVDGQKIASLGLKIRKQKSYHGLALNFDMDLTPFSWITPCGLEGIQMTQVSHFIQQPDQLASQTALIKALCHQLQPEIDS</sequence>
<dbReference type="EC" id="2.3.1.181" evidence="1"/>
<dbReference type="EMBL" id="CP000109">
    <property type="protein sequence ID" value="ABB42230.1"/>
    <property type="molecule type" value="Genomic_DNA"/>
</dbReference>
<dbReference type="SMR" id="Q31F43"/>
<dbReference type="STRING" id="317025.Tcr_1638"/>
<dbReference type="KEGG" id="tcx:Tcr_1638"/>
<dbReference type="eggNOG" id="COG0321">
    <property type="taxonomic scope" value="Bacteria"/>
</dbReference>
<dbReference type="HOGENOM" id="CLU_035168_3_1_6"/>
<dbReference type="OrthoDB" id="9787061at2"/>
<dbReference type="UniPathway" id="UPA00538">
    <property type="reaction ID" value="UER00592"/>
</dbReference>
<dbReference type="GO" id="GO:0005737">
    <property type="term" value="C:cytoplasm"/>
    <property type="evidence" value="ECO:0007669"/>
    <property type="project" value="UniProtKB-SubCell"/>
</dbReference>
<dbReference type="GO" id="GO:0033819">
    <property type="term" value="F:lipoyl(octanoyl) transferase activity"/>
    <property type="evidence" value="ECO:0007669"/>
    <property type="project" value="UniProtKB-EC"/>
</dbReference>
<dbReference type="GO" id="GO:0036211">
    <property type="term" value="P:protein modification process"/>
    <property type="evidence" value="ECO:0007669"/>
    <property type="project" value="InterPro"/>
</dbReference>
<dbReference type="CDD" id="cd16444">
    <property type="entry name" value="LipB"/>
    <property type="match status" value="1"/>
</dbReference>
<dbReference type="FunFam" id="3.30.930.10:FF:000020">
    <property type="entry name" value="Octanoyltransferase"/>
    <property type="match status" value="1"/>
</dbReference>
<dbReference type="Gene3D" id="3.30.930.10">
    <property type="entry name" value="Bira Bifunctional Protein, Domain 2"/>
    <property type="match status" value="1"/>
</dbReference>
<dbReference type="HAMAP" id="MF_00013">
    <property type="entry name" value="LipB"/>
    <property type="match status" value="1"/>
</dbReference>
<dbReference type="InterPro" id="IPR045864">
    <property type="entry name" value="aa-tRNA-synth_II/BPL/LPL"/>
</dbReference>
<dbReference type="InterPro" id="IPR004143">
    <property type="entry name" value="BPL_LPL_catalytic"/>
</dbReference>
<dbReference type="InterPro" id="IPR000544">
    <property type="entry name" value="Octanoyltransferase"/>
</dbReference>
<dbReference type="InterPro" id="IPR020605">
    <property type="entry name" value="Octanoyltransferase_CS"/>
</dbReference>
<dbReference type="NCBIfam" id="TIGR00214">
    <property type="entry name" value="lipB"/>
    <property type="match status" value="1"/>
</dbReference>
<dbReference type="NCBIfam" id="NF010922">
    <property type="entry name" value="PRK14342.1"/>
    <property type="match status" value="1"/>
</dbReference>
<dbReference type="PANTHER" id="PTHR10993:SF7">
    <property type="entry name" value="LIPOYLTRANSFERASE 2, MITOCHONDRIAL-RELATED"/>
    <property type="match status" value="1"/>
</dbReference>
<dbReference type="PANTHER" id="PTHR10993">
    <property type="entry name" value="OCTANOYLTRANSFERASE"/>
    <property type="match status" value="1"/>
</dbReference>
<dbReference type="Pfam" id="PF21948">
    <property type="entry name" value="LplA-B_cat"/>
    <property type="match status" value="1"/>
</dbReference>
<dbReference type="PIRSF" id="PIRSF016262">
    <property type="entry name" value="LPLase"/>
    <property type="match status" value="1"/>
</dbReference>
<dbReference type="SUPFAM" id="SSF55681">
    <property type="entry name" value="Class II aaRS and biotin synthetases"/>
    <property type="match status" value="1"/>
</dbReference>
<dbReference type="PROSITE" id="PS51733">
    <property type="entry name" value="BPL_LPL_CATALYTIC"/>
    <property type="match status" value="1"/>
</dbReference>
<dbReference type="PROSITE" id="PS01313">
    <property type="entry name" value="LIPB"/>
    <property type="match status" value="1"/>
</dbReference>
<reference key="1">
    <citation type="journal article" date="2006" name="PLoS Biol.">
        <title>The genome of deep-sea vent chemolithoautotroph Thiomicrospira crunogena XCL-2.</title>
        <authorList>
            <person name="Scott K.M."/>
            <person name="Sievert S.M."/>
            <person name="Abril F.N."/>
            <person name="Ball L.A."/>
            <person name="Barrett C.J."/>
            <person name="Blake R.A."/>
            <person name="Boller A.J."/>
            <person name="Chain P.S.G."/>
            <person name="Clark J.A."/>
            <person name="Davis C.R."/>
            <person name="Detter C."/>
            <person name="Do K.F."/>
            <person name="Dobrinski K.P."/>
            <person name="Faza B.I."/>
            <person name="Fitzpatrick K.A."/>
            <person name="Freyermuth S.K."/>
            <person name="Harmer T.L."/>
            <person name="Hauser L.J."/>
            <person name="Huegler M."/>
            <person name="Kerfeld C.A."/>
            <person name="Klotz M.G."/>
            <person name="Kong W.W."/>
            <person name="Land M."/>
            <person name="Lapidus A."/>
            <person name="Larimer F.W."/>
            <person name="Longo D.L."/>
            <person name="Lucas S."/>
            <person name="Malfatti S.A."/>
            <person name="Massey S.E."/>
            <person name="Martin D.D."/>
            <person name="McCuddin Z."/>
            <person name="Meyer F."/>
            <person name="Moore J.L."/>
            <person name="Ocampo L.H. Jr."/>
            <person name="Paul J.H."/>
            <person name="Paulsen I.T."/>
            <person name="Reep D.K."/>
            <person name="Ren Q."/>
            <person name="Ross R.L."/>
            <person name="Sato P.Y."/>
            <person name="Thomas P."/>
            <person name="Tinkham L.E."/>
            <person name="Zeruth G.T."/>
        </authorList>
    </citation>
    <scope>NUCLEOTIDE SEQUENCE [LARGE SCALE GENOMIC DNA]</scope>
    <source>
        <strain>DSM 25203 / XCL-2</strain>
    </source>
</reference>